<gene>
    <name evidence="2" type="primary">gshAB</name>
    <name evidence="2" type="synonym">gshF</name>
    <name type="ordered locus">lwe2717</name>
</gene>
<accession>A0AMA3</accession>
<comment type="function">
    <text evidence="2">Synthesizes glutathione from L-glutamate and L-cysteine via gamma-L-glutamyl-L-cysteine.</text>
</comment>
<comment type="catalytic activity">
    <reaction evidence="2">
        <text>L-cysteine + L-glutamate + ATP = gamma-L-glutamyl-L-cysteine + ADP + phosphate + H(+)</text>
        <dbReference type="Rhea" id="RHEA:13285"/>
        <dbReference type="ChEBI" id="CHEBI:15378"/>
        <dbReference type="ChEBI" id="CHEBI:29985"/>
        <dbReference type="ChEBI" id="CHEBI:30616"/>
        <dbReference type="ChEBI" id="CHEBI:35235"/>
        <dbReference type="ChEBI" id="CHEBI:43474"/>
        <dbReference type="ChEBI" id="CHEBI:58173"/>
        <dbReference type="ChEBI" id="CHEBI:456216"/>
        <dbReference type="EC" id="6.3.2.2"/>
    </reaction>
</comment>
<comment type="catalytic activity">
    <reaction evidence="2">
        <text>gamma-L-glutamyl-L-cysteine + glycine + ATP = glutathione + ADP + phosphate + H(+)</text>
        <dbReference type="Rhea" id="RHEA:13557"/>
        <dbReference type="ChEBI" id="CHEBI:15378"/>
        <dbReference type="ChEBI" id="CHEBI:30616"/>
        <dbReference type="ChEBI" id="CHEBI:43474"/>
        <dbReference type="ChEBI" id="CHEBI:57305"/>
        <dbReference type="ChEBI" id="CHEBI:57925"/>
        <dbReference type="ChEBI" id="CHEBI:58173"/>
        <dbReference type="ChEBI" id="CHEBI:456216"/>
        <dbReference type="EC" id="6.3.2.3"/>
    </reaction>
</comment>
<comment type="cofactor">
    <cofactor evidence="1">
        <name>Mg(2+)</name>
        <dbReference type="ChEBI" id="CHEBI:18420"/>
    </cofactor>
    <cofactor evidence="1">
        <name>Mn(2+)</name>
        <dbReference type="ChEBI" id="CHEBI:29035"/>
    </cofactor>
    <text evidence="1">Binds 2 magnesium or manganese ions per subunit.</text>
</comment>
<comment type="pathway">
    <text evidence="2">Sulfur metabolism; glutathione biosynthesis; glutathione from L-cysteine and L-glutamate: step 1/2.</text>
</comment>
<comment type="pathway">
    <text evidence="2">Sulfur metabolism; glutathione biosynthesis; glutathione from L-cysteine and L-glutamate: step 2/2.</text>
</comment>
<comment type="subunit">
    <text evidence="2">Monomer.</text>
</comment>
<comment type="similarity">
    <text evidence="2">In the N-terminal section; belongs to the glutamate--cysteine ligase type 1 family. Type 2 subfamily.</text>
</comment>
<organism>
    <name type="scientific">Listeria welshimeri serovar 6b (strain ATCC 35897 / DSM 20650 / CCUG 15529 / CIP 8149 / NCTC 11857 / SLCC 5334 / V8)</name>
    <dbReference type="NCBI Taxonomy" id="386043"/>
    <lineage>
        <taxon>Bacteria</taxon>
        <taxon>Bacillati</taxon>
        <taxon>Bacillota</taxon>
        <taxon>Bacilli</taxon>
        <taxon>Bacillales</taxon>
        <taxon>Listeriaceae</taxon>
        <taxon>Listeria</taxon>
    </lineage>
</organism>
<protein>
    <recommendedName>
        <fullName evidence="2">Glutathione biosynthesis bifunctional protein GshAB</fullName>
    </recommendedName>
    <alternativeName>
        <fullName evidence="2">Gamma-GCS-GS</fullName>
        <shortName evidence="2">GCS-GS</shortName>
    </alternativeName>
    <domain>
        <recommendedName>
            <fullName evidence="2">Glutamate--cysteine ligase</fullName>
            <ecNumber evidence="2">6.3.2.2</ecNumber>
        </recommendedName>
        <alternativeName>
            <fullName evidence="2">Gamma-ECS</fullName>
            <shortName evidence="2">GCS</shortName>
        </alternativeName>
        <alternativeName>
            <fullName evidence="2">Gamma-glutamylcysteine synthetase</fullName>
        </alternativeName>
    </domain>
    <domain>
        <recommendedName>
            <fullName evidence="2">Glutathione synthetase</fullName>
            <ecNumber evidence="2">6.3.2.3</ecNumber>
        </recommendedName>
        <alternativeName>
            <fullName evidence="2">GSH synthetase</fullName>
            <shortName evidence="2">GS</shortName>
            <shortName evidence="2">GSH-S</shortName>
            <shortName evidence="2">GSHase</shortName>
        </alternativeName>
        <alternativeName>
            <fullName evidence="2">Glutathione synthase</fullName>
        </alternativeName>
    </domain>
</protein>
<feature type="chain" id="PRO_1000133720" description="Glutathione biosynthesis bifunctional protein GshAB">
    <location>
        <begin position="1"/>
        <end position="776"/>
    </location>
</feature>
<feature type="domain" description="ATP-grasp" evidence="2">
    <location>
        <begin position="521"/>
        <end position="775"/>
    </location>
</feature>
<feature type="region of interest" description="Glutamate--cysteine ligase">
    <location>
        <begin position="1"/>
        <end position="354"/>
    </location>
</feature>
<feature type="binding site" evidence="2">
    <location>
        <begin position="548"/>
        <end position="606"/>
    </location>
    <ligand>
        <name>ATP</name>
        <dbReference type="ChEBI" id="CHEBI:30616"/>
    </ligand>
</feature>
<feature type="binding site" evidence="2">
    <location>
        <position position="728"/>
    </location>
    <ligand>
        <name>Mg(2+)</name>
        <dbReference type="ChEBI" id="CHEBI:18420"/>
        <label>1</label>
    </ligand>
</feature>
<feature type="binding site" evidence="2">
    <location>
        <position position="728"/>
    </location>
    <ligand>
        <name>Mn(2+)</name>
        <dbReference type="ChEBI" id="CHEBI:29035"/>
        <label>1</label>
    </ligand>
</feature>
<feature type="binding site" evidence="2">
    <location>
        <position position="745"/>
    </location>
    <ligand>
        <name>Mg(2+)</name>
        <dbReference type="ChEBI" id="CHEBI:18420"/>
        <label>1</label>
    </ligand>
</feature>
<feature type="binding site" evidence="2">
    <location>
        <position position="745"/>
    </location>
    <ligand>
        <name>Mg(2+)</name>
        <dbReference type="ChEBI" id="CHEBI:18420"/>
        <label>2</label>
    </ligand>
</feature>
<feature type="binding site" evidence="2">
    <location>
        <position position="745"/>
    </location>
    <ligand>
        <name>Mn(2+)</name>
        <dbReference type="ChEBI" id="CHEBI:29035"/>
        <label>1</label>
    </ligand>
</feature>
<feature type="binding site" evidence="2">
    <location>
        <position position="745"/>
    </location>
    <ligand>
        <name>Mn(2+)</name>
        <dbReference type="ChEBI" id="CHEBI:29035"/>
        <label>2</label>
    </ligand>
</feature>
<feature type="binding site" evidence="2">
    <location>
        <position position="747"/>
    </location>
    <ligand>
        <name>Mg(2+)</name>
        <dbReference type="ChEBI" id="CHEBI:18420"/>
        <label>2</label>
    </ligand>
</feature>
<feature type="binding site" evidence="2">
    <location>
        <position position="747"/>
    </location>
    <ligand>
        <name>Mn(2+)</name>
        <dbReference type="ChEBI" id="CHEBI:29035"/>
        <label>2</label>
    </ligand>
</feature>
<keyword id="KW-0067">ATP-binding</keyword>
<keyword id="KW-0317">Glutathione biosynthesis</keyword>
<keyword id="KW-0436">Ligase</keyword>
<keyword id="KW-0460">Magnesium</keyword>
<keyword id="KW-0464">Manganese</keyword>
<keyword id="KW-0479">Metal-binding</keyword>
<keyword id="KW-0511">Multifunctional enzyme</keyword>
<keyword id="KW-0547">Nucleotide-binding</keyword>
<reference key="1">
    <citation type="journal article" date="2006" name="J. Bacteriol.">
        <title>Whole-genome sequence of Listeria welshimeri reveals common steps in genome reduction with Listeria innocua as compared to Listeria monocytogenes.</title>
        <authorList>
            <person name="Hain T."/>
            <person name="Steinweg C."/>
            <person name="Kuenne C.T."/>
            <person name="Billion A."/>
            <person name="Ghai R."/>
            <person name="Chatterjee S.S."/>
            <person name="Domann E."/>
            <person name="Kaerst U."/>
            <person name="Goesmann A."/>
            <person name="Bekel T."/>
            <person name="Bartels D."/>
            <person name="Kaiser O."/>
            <person name="Meyer F."/>
            <person name="Puehler A."/>
            <person name="Weisshaar B."/>
            <person name="Wehland J."/>
            <person name="Liang C."/>
            <person name="Dandekar T."/>
            <person name="Lampidis R."/>
            <person name="Kreft J."/>
            <person name="Goebel W."/>
            <person name="Chakraborty T."/>
        </authorList>
    </citation>
    <scope>NUCLEOTIDE SEQUENCE [LARGE SCALE GENOMIC DNA]</scope>
    <source>
        <strain>ATCC 35897 / DSM 20650 / CCUG 15529 / CIP 8149 / NCTC 11857 / SLCC 5334 / V8</strain>
    </source>
</reference>
<name>GSHAB_LISW6</name>
<proteinExistence type="inferred from homology"/>
<evidence type="ECO:0000250" key="1"/>
<evidence type="ECO:0000255" key="2">
    <source>
        <dbReference type="HAMAP-Rule" id="MF_00782"/>
    </source>
</evidence>
<dbReference type="EC" id="6.3.2.2" evidence="2"/>
<dbReference type="EC" id="6.3.2.3" evidence="2"/>
<dbReference type="EMBL" id="AM263198">
    <property type="protein sequence ID" value="CAK22135.1"/>
    <property type="molecule type" value="Genomic_DNA"/>
</dbReference>
<dbReference type="RefSeq" id="WP_011703406.1">
    <property type="nucleotide sequence ID" value="NC_008555.1"/>
</dbReference>
<dbReference type="SMR" id="A0AMA3"/>
<dbReference type="STRING" id="386043.lwe2717"/>
<dbReference type="GeneID" id="61190640"/>
<dbReference type="KEGG" id="lwe:lwe2717"/>
<dbReference type="eggNOG" id="COG0189">
    <property type="taxonomic scope" value="Bacteria"/>
</dbReference>
<dbReference type="eggNOG" id="COG1181">
    <property type="taxonomic scope" value="Bacteria"/>
</dbReference>
<dbReference type="eggNOG" id="COG2918">
    <property type="taxonomic scope" value="Bacteria"/>
</dbReference>
<dbReference type="HOGENOM" id="CLU_020728_1_0_9"/>
<dbReference type="OrthoDB" id="9803907at2"/>
<dbReference type="UniPathway" id="UPA00142">
    <property type="reaction ID" value="UER00209"/>
</dbReference>
<dbReference type="UniPathway" id="UPA00142">
    <property type="reaction ID" value="UER00210"/>
</dbReference>
<dbReference type="Proteomes" id="UP000000779">
    <property type="component" value="Chromosome"/>
</dbReference>
<dbReference type="GO" id="GO:0005829">
    <property type="term" value="C:cytosol"/>
    <property type="evidence" value="ECO:0007669"/>
    <property type="project" value="TreeGrafter"/>
</dbReference>
<dbReference type="GO" id="GO:0005524">
    <property type="term" value="F:ATP binding"/>
    <property type="evidence" value="ECO:0007669"/>
    <property type="project" value="UniProtKB-UniRule"/>
</dbReference>
<dbReference type="GO" id="GO:0004357">
    <property type="term" value="F:glutamate-cysteine ligase activity"/>
    <property type="evidence" value="ECO:0007669"/>
    <property type="project" value="UniProtKB-UniRule"/>
</dbReference>
<dbReference type="GO" id="GO:0004363">
    <property type="term" value="F:glutathione synthase activity"/>
    <property type="evidence" value="ECO:0007669"/>
    <property type="project" value="UniProtKB-UniRule"/>
</dbReference>
<dbReference type="GO" id="GO:0046872">
    <property type="term" value="F:metal ion binding"/>
    <property type="evidence" value="ECO:0007669"/>
    <property type="project" value="UniProtKB-KW"/>
</dbReference>
<dbReference type="Gene3D" id="3.30.590.20">
    <property type="match status" value="1"/>
</dbReference>
<dbReference type="Gene3D" id="3.30.1490.20">
    <property type="entry name" value="ATP-grasp fold, A domain"/>
    <property type="match status" value="1"/>
</dbReference>
<dbReference type="Gene3D" id="3.30.470.20">
    <property type="entry name" value="ATP-grasp fold, B domain"/>
    <property type="match status" value="2"/>
</dbReference>
<dbReference type="HAMAP" id="MF_00782">
    <property type="entry name" value="Glut_biosynth"/>
    <property type="match status" value="1"/>
</dbReference>
<dbReference type="InterPro" id="IPR011761">
    <property type="entry name" value="ATP-grasp"/>
</dbReference>
<dbReference type="InterPro" id="IPR013815">
    <property type="entry name" value="ATP_grasp_subdomain_1"/>
</dbReference>
<dbReference type="InterPro" id="IPR014746">
    <property type="entry name" value="Gln_synth/guanido_kin_cat_dom"/>
</dbReference>
<dbReference type="InterPro" id="IPR007370">
    <property type="entry name" value="Glu_cys_ligase"/>
</dbReference>
<dbReference type="InterPro" id="IPR006335">
    <property type="entry name" value="Glut_biosynth"/>
</dbReference>
<dbReference type="InterPro" id="IPR006334">
    <property type="entry name" value="Glut_cys_ligase"/>
</dbReference>
<dbReference type="InterPro" id="IPR040657">
    <property type="entry name" value="GshAB_ATP-grasp"/>
</dbReference>
<dbReference type="InterPro" id="IPR020561">
    <property type="entry name" value="PRibGlycinamid_synth_ATP-grasp"/>
</dbReference>
<dbReference type="NCBIfam" id="TIGR01435">
    <property type="entry name" value="glu_cys_lig_rel"/>
    <property type="match status" value="1"/>
</dbReference>
<dbReference type="NCBIfam" id="NF002688">
    <property type="entry name" value="PRK02471.1"/>
    <property type="match status" value="1"/>
</dbReference>
<dbReference type="PANTHER" id="PTHR38761">
    <property type="entry name" value="GLUTAMATE--CYSTEINE LIGASE"/>
    <property type="match status" value="1"/>
</dbReference>
<dbReference type="PANTHER" id="PTHR38761:SF1">
    <property type="entry name" value="GLUTAMATE--CYSTEINE LIGASE"/>
    <property type="match status" value="1"/>
</dbReference>
<dbReference type="Pfam" id="PF18419">
    <property type="entry name" value="ATP-grasp_6"/>
    <property type="match status" value="1"/>
</dbReference>
<dbReference type="Pfam" id="PF01071">
    <property type="entry name" value="GARS_A"/>
    <property type="match status" value="1"/>
</dbReference>
<dbReference type="Pfam" id="PF04262">
    <property type="entry name" value="Glu_cys_ligase"/>
    <property type="match status" value="2"/>
</dbReference>
<dbReference type="SUPFAM" id="SSF55931">
    <property type="entry name" value="Glutamine synthetase/guanido kinase"/>
    <property type="match status" value="1"/>
</dbReference>
<dbReference type="SUPFAM" id="SSF56059">
    <property type="entry name" value="Glutathione synthetase ATP-binding domain-like"/>
    <property type="match status" value="1"/>
</dbReference>
<dbReference type="PROSITE" id="PS50975">
    <property type="entry name" value="ATP_GRASP"/>
    <property type="match status" value="1"/>
</dbReference>
<sequence length="776" mass="88615">MIKLDMTILDSLKENKALRKLLFSGHFGLEKENIRVTSDGKLALTPHPAIFGPKEDNPYIKTDFSESQIEMITPVTDSIDDVYNWLENLHNIVSLRSKNELLWPSSNPPILPAEKDIPIAEYKTPDSPDRKYREHLAQGYGKKIQLLSGIHYNFSFPEALIDGLYDEISLPNESKRDFKNRLYLKVAKYFMKNRWLLIYLTGASPVYLADFTKTKQEEKLRDGSSALHDGISLRNSNAGYKNKESLYVDYNSFDAYISSISNYIEAGKIESMREFYNPIRLKNAHTDQTVESLAKHGVEYLEIRSIDLNPLEPNGISKEALHFIHLFLIKGLLSEDRELCENNQQLADENENNIALNGLSKPAIKNCDNEEMALADAGLLELDKMNDFIQSLRPEDTYFQAIIEKQKERLLHPEKTIAAQVKEQSATAGFIEFHLNQAKTYMEETEALAYKLIGAEDMELSTQIIWKDAIARGIKVDVLDRAENFLRFQKGDHVEYVKQASKTSKDNYVSVLMMENKVVTKLVLAENNIRVPFGDSFSDQALALEAFSLFKDKQIVVKPKSTNYGWGISIFKNKFTTEDYQEALNIAFSYDSSVIIEEFIPGDEFRFLVINDKVEAVLKRVPANVTGDGIHTVRELVEEKNMDPLRGTDHLKPLEKIRTGPEETLMLSMQKLSWDSIPKANETIYLRENSNVSTGGDSIDYTAEMDDYFKEIAIRATQVLDAKICGVDIIVPRETIDRDKHAIIELNFNPAMHMHCFPYQGEQKKIGDKILDFLFE</sequence>